<gene>
    <name evidence="6" type="primary">PDS5E</name>
    <name evidence="8" type="ordered locus">At1g15940</name>
    <name evidence="9" type="ORF">T24D18.4</name>
</gene>
<sequence>MGPLVEATEFSKEQALTDAAENLLKPHFSTDATLSLLEVMESLLATVEQDLSSSVQKALHPPMRALVSADLLRNPDSDVRVSVVSCLTEIMRITAPEAPYNDEQMKDIFQVTIEAFEKLADASSRSYRKAEVILETVAKVRSSLVMLDLECDDLVLEMFQRFLKIIRPDHPQLVLVSMETIMITVIDESEEVPMDLLEILLTTVKKDSQDVSPAALTLVEKVLSSCTCKLQPCIMEALKSSGTSLDMYSPVVSSICQSEFATTQAHNDVKPKDNEADEKISEGQVVPSDSLEDKLNLGLSRKGTRSKRSARGGTRRANGDEKVITANEGLSESTDAETASGSTRKRGWKPKSLMNPEEGYSFKTSSSKKVQEKELGDSSLGKVAAKKVPLPSKVGQTNQSVVISLSSSGRARTGSRKRSRTKMEETDHDVSSVATQPAKKQTVKKTNPAKEDLTKSNVKKHEDGIKTGKSSKKEKADNGLAKTSAKKPLAETMMVKPSGKKLVHSDAKKKNSEGASMDTPIPQSSKSKKKDSRATTPATKKSEQAPKSHPKMKRIAGEEVESNTNELGEELVGKRVNVWWPLDKKFYEGVIKSYCRVKKMHQVTYSDGDVEELNLKKERFKIIEDKSSASEDKEDDLLESTPLSAFIQREKSKKRKIVSKNVEPSSSPEVRSSMQTMKKKDSVTDSIKQTKRTKGALKAVSNEPESTTGKNLKSLKKLNGEPDKTRGRTGKKQKVTQAMHRKIEKDCDEQEDLETKDEEDSLKLGKESDAEPDRMEDHQELPENHNVETKTDGEEQEAAKEPTAESKTNGEEPNAEPETDGKEHKSLKEPNAEPKSDGEEQEAAKEPNAELKTDGENQEAAKELTAERKTDEEEHKVADEVEQKSQKETNVEPEAEGEEQKSVEEPNAEPKTKVEEKESAKEQTADTKLIEKEDMSKTKGEEIDKETYSSIPETGKVGNEAEEDDQRVIKELEEESDKAEVSTTVLEVDP</sequence>
<name>PDS5E_ARATH</name>
<feature type="chain" id="PRO_0000453279" description="Sister chromatid cohesion protein PDS5 homolog E">
    <location>
        <begin position="1"/>
        <end position="990"/>
    </location>
</feature>
<feature type="repeat" description="HEAT 1" evidence="2">
    <location>
        <begin position="31"/>
        <end position="57"/>
    </location>
</feature>
<feature type="repeat" description="HEAT 2" evidence="2">
    <location>
        <begin position="58"/>
        <end position="96"/>
    </location>
</feature>
<feature type="repeat" description="HEAT 3" evidence="2">
    <location>
        <begin position="153"/>
        <end position="190"/>
    </location>
</feature>
<feature type="repeat" description="HEAT 4" evidence="2">
    <location>
        <begin position="191"/>
        <end position="228"/>
    </location>
</feature>
<feature type="repeat" description="HEAT 5" evidence="2">
    <location>
        <begin position="232"/>
        <end position="269"/>
    </location>
</feature>
<feature type="region of interest" description="Disordered" evidence="4">
    <location>
        <begin position="262"/>
        <end position="565"/>
    </location>
</feature>
<feature type="region of interest" description="Disordered" evidence="4">
    <location>
        <begin position="653"/>
        <end position="966"/>
    </location>
</feature>
<feature type="short sequence motif" description="Nuclear localization signal 1" evidence="3">
    <location>
        <begin position="458"/>
        <end position="465"/>
    </location>
</feature>
<feature type="short sequence motif" description="Nuclear localization signal 2" evidence="3">
    <location>
        <begin position="539"/>
        <end position="546"/>
    </location>
</feature>
<feature type="short sequence motif" description="Nuclear localization signal 3" evidence="3">
    <location>
        <begin position="583"/>
        <end position="590"/>
    </location>
</feature>
<feature type="short sequence motif" description="Nuclear localization signal 4" evidence="3">
    <location>
        <begin position="677"/>
        <end position="684"/>
    </location>
</feature>
<feature type="short sequence motif" description="Nuclear localization signal 5" evidence="3">
    <location>
        <begin position="715"/>
        <end position="722"/>
    </location>
</feature>
<feature type="compositionally biased region" description="Basic and acidic residues" evidence="4">
    <location>
        <begin position="267"/>
        <end position="281"/>
    </location>
</feature>
<feature type="compositionally biased region" description="Basic residues" evidence="4">
    <location>
        <begin position="302"/>
        <end position="314"/>
    </location>
</feature>
<feature type="compositionally biased region" description="Polar residues" evidence="4">
    <location>
        <begin position="328"/>
        <end position="342"/>
    </location>
</feature>
<feature type="compositionally biased region" description="Polar residues" evidence="4">
    <location>
        <begin position="394"/>
        <end position="410"/>
    </location>
</feature>
<feature type="compositionally biased region" description="Basic and acidic residues" evidence="4">
    <location>
        <begin position="421"/>
        <end position="430"/>
    </location>
</feature>
<feature type="compositionally biased region" description="Basic and acidic residues" evidence="4">
    <location>
        <begin position="448"/>
        <end position="477"/>
    </location>
</feature>
<feature type="compositionally biased region" description="Basic and acidic residues" evidence="4">
    <location>
        <begin position="503"/>
        <end position="512"/>
    </location>
</feature>
<feature type="compositionally biased region" description="Low complexity" evidence="4">
    <location>
        <begin position="662"/>
        <end position="673"/>
    </location>
</feature>
<feature type="compositionally biased region" description="Basic residues" evidence="4">
    <location>
        <begin position="727"/>
        <end position="742"/>
    </location>
</feature>
<feature type="compositionally biased region" description="Acidic residues" evidence="4">
    <location>
        <begin position="746"/>
        <end position="760"/>
    </location>
</feature>
<feature type="compositionally biased region" description="Basic and acidic residues" evidence="4">
    <location>
        <begin position="761"/>
        <end position="810"/>
    </location>
</feature>
<feature type="compositionally biased region" description="Basic and acidic residues" evidence="4">
    <location>
        <begin position="819"/>
        <end position="890"/>
    </location>
</feature>
<feature type="compositionally biased region" description="Basic and acidic residues" evidence="4">
    <location>
        <begin position="898"/>
        <end position="947"/>
    </location>
</feature>
<protein>
    <recommendedName>
        <fullName evidence="7">Sister chromatid cohesion protein PDS5 homolog E</fullName>
    </recommendedName>
    <alternativeName>
        <fullName evidence="7">Precocious dissociation of sisters protein 5-E</fullName>
        <shortName evidence="6">AtPDS5E</shortName>
    </alternativeName>
</protein>
<dbReference type="EMBL" id="AC010924">
    <property type="protein sequence ID" value="AAF18491.1"/>
    <property type="molecule type" value="Genomic_DNA"/>
</dbReference>
<dbReference type="EMBL" id="CP002684">
    <property type="protein sequence ID" value="AEE29387.1"/>
    <property type="molecule type" value="Genomic_DNA"/>
</dbReference>
<dbReference type="EMBL" id="AK229098">
    <property type="protein sequence ID" value="BAF00977.1"/>
    <property type="molecule type" value="mRNA"/>
</dbReference>
<dbReference type="PIR" id="H86293">
    <property type="entry name" value="H86293"/>
</dbReference>
<dbReference type="RefSeq" id="NP_173046.2">
    <property type="nucleotide sequence ID" value="NM_101462.5"/>
</dbReference>
<dbReference type="SMR" id="Q9S9P0"/>
<dbReference type="FunCoup" id="Q9S9P0">
    <property type="interactions" value="347"/>
</dbReference>
<dbReference type="STRING" id="3702.Q9S9P0"/>
<dbReference type="iPTMnet" id="Q9S9P0"/>
<dbReference type="PaxDb" id="3702-AT1G15940.1"/>
<dbReference type="ProteomicsDB" id="176959"/>
<dbReference type="EnsemblPlants" id="AT1G15940.1">
    <property type="protein sequence ID" value="AT1G15940.1"/>
    <property type="gene ID" value="AT1G15940"/>
</dbReference>
<dbReference type="GeneID" id="838164"/>
<dbReference type="Gramene" id="AT1G15940.1">
    <property type="protein sequence ID" value="AT1G15940.1"/>
    <property type="gene ID" value="AT1G15940"/>
</dbReference>
<dbReference type="KEGG" id="ath:AT1G15940"/>
<dbReference type="Araport" id="AT1G15940"/>
<dbReference type="TAIR" id="AT1G15940">
    <property type="gene designation" value="PDS5E"/>
</dbReference>
<dbReference type="eggNOG" id="KOG1525">
    <property type="taxonomic scope" value="Eukaryota"/>
</dbReference>
<dbReference type="HOGENOM" id="CLU_008968_0_0_1"/>
<dbReference type="InParanoid" id="Q9S9P0"/>
<dbReference type="OMA" id="NDDHMKD"/>
<dbReference type="PhylomeDB" id="Q9S9P0"/>
<dbReference type="CD-CODE" id="4299E36E">
    <property type="entry name" value="Nucleolus"/>
</dbReference>
<dbReference type="PRO" id="PR:Q9S9P0"/>
<dbReference type="Proteomes" id="UP000006548">
    <property type="component" value="Chromosome 1"/>
</dbReference>
<dbReference type="ExpressionAtlas" id="Q9S9P0">
    <property type="expression patterns" value="baseline and differential"/>
</dbReference>
<dbReference type="GO" id="GO:0005634">
    <property type="term" value="C:nucleus"/>
    <property type="evidence" value="ECO:0007669"/>
    <property type="project" value="UniProtKB-SubCell"/>
</dbReference>
<dbReference type="GO" id="GO:0009506">
    <property type="term" value="C:plasmodesma"/>
    <property type="evidence" value="ECO:0007005"/>
    <property type="project" value="TAIR"/>
</dbReference>
<dbReference type="GO" id="GO:0051301">
    <property type="term" value="P:cell division"/>
    <property type="evidence" value="ECO:0007669"/>
    <property type="project" value="UniProtKB-KW"/>
</dbReference>
<dbReference type="GO" id="GO:0006310">
    <property type="term" value="P:DNA recombination"/>
    <property type="evidence" value="ECO:0000315"/>
    <property type="project" value="UniProtKB"/>
</dbReference>
<dbReference type="GO" id="GO:0006281">
    <property type="term" value="P:DNA repair"/>
    <property type="evidence" value="ECO:0000315"/>
    <property type="project" value="UniProtKB"/>
</dbReference>
<dbReference type="GO" id="GO:0035825">
    <property type="term" value="P:homologous recombination"/>
    <property type="evidence" value="ECO:0000315"/>
    <property type="project" value="UniProtKB"/>
</dbReference>
<dbReference type="GO" id="GO:0009556">
    <property type="term" value="P:microsporogenesis"/>
    <property type="evidence" value="ECO:0000316"/>
    <property type="project" value="TAIR"/>
</dbReference>
<dbReference type="GO" id="GO:0007064">
    <property type="term" value="P:mitotic sister chromatid cohesion"/>
    <property type="evidence" value="ECO:0000315"/>
    <property type="project" value="UniProtKB"/>
</dbReference>
<dbReference type="CDD" id="cd20404">
    <property type="entry name" value="Tudor_Agenet_AtEML-like"/>
    <property type="match status" value="1"/>
</dbReference>
<dbReference type="FunFam" id="2.30.30.140:FF:000033">
    <property type="entry name" value="Binding protein"/>
    <property type="match status" value="1"/>
</dbReference>
<dbReference type="Gene3D" id="2.30.30.140">
    <property type="match status" value="1"/>
</dbReference>
<dbReference type="InterPro" id="IPR016024">
    <property type="entry name" value="ARM-type_fold"/>
</dbReference>
<dbReference type="InterPro" id="IPR039776">
    <property type="entry name" value="Pds5"/>
</dbReference>
<dbReference type="PANTHER" id="PTHR12663">
    <property type="entry name" value="ANDROGEN INDUCED INHIBITOR OF PROLIFERATION AS3 / PDS5-RELATED"/>
    <property type="match status" value="1"/>
</dbReference>
<dbReference type="PANTHER" id="PTHR12663:SF69">
    <property type="entry name" value="SISTER CHROMATID COHESION PROTEIN PDS5 HOMOLOG E"/>
    <property type="match status" value="1"/>
</dbReference>
<dbReference type="Pfam" id="PF20168">
    <property type="entry name" value="PDS5"/>
    <property type="match status" value="1"/>
</dbReference>
<dbReference type="SUPFAM" id="SSF48371">
    <property type="entry name" value="ARM repeat"/>
    <property type="match status" value="1"/>
</dbReference>
<dbReference type="SUPFAM" id="SSF63748">
    <property type="entry name" value="Tudor/PWWP/MBT"/>
    <property type="match status" value="1"/>
</dbReference>
<organism>
    <name type="scientific">Arabidopsis thaliana</name>
    <name type="common">Mouse-ear cress</name>
    <dbReference type="NCBI Taxonomy" id="3702"/>
    <lineage>
        <taxon>Eukaryota</taxon>
        <taxon>Viridiplantae</taxon>
        <taxon>Streptophyta</taxon>
        <taxon>Embryophyta</taxon>
        <taxon>Tracheophyta</taxon>
        <taxon>Spermatophyta</taxon>
        <taxon>Magnoliopsida</taxon>
        <taxon>eudicotyledons</taxon>
        <taxon>Gunneridae</taxon>
        <taxon>Pentapetalae</taxon>
        <taxon>rosids</taxon>
        <taxon>malvids</taxon>
        <taxon>Brassicales</taxon>
        <taxon>Brassicaceae</taxon>
        <taxon>Camelineae</taxon>
        <taxon>Arabidopsis</taxon>
    </lineage>
</organism>
<keyword id="KW-0131">Cell cycle</keyword>
<keyword id="KW-0132">Cell division</keyword>
<keyword id="KW-0227">DNA damage</keyword>
<keyword id="KW-0234">DNA repair</keyword>
<keyword id="KW-0498">Mitosis</keyword>
<keyword id="KW-0539">Nucleus</keyword>
<keyword id="KW-1185">Reference proteome</keyword>
<keyword id="KW-0677">Repeat</keyword>
<evidence type="ECO:0000250" key="1">
    <source>
        <dbReference type="UniProtKB" id="Q29RF7"/>
    </source>
</evidence>
<evidence type="ECO:0000255" key="2"/>
<evidence type="ECO:0000255" key="3">
    <source>
        <dbReference type="PROSITE-ProRule" id="PRU00768"/>
    </source>
</evidence>
<evidence type="ECO:0000256" key="4">
    <source>
        <dbReference type="SAM" id="MobiDB-lite"/>
    </source>
</evidence>
<evidence type="ECO:0000269" key="5">
    <source>
    </source>
</evidence>
<evidence type="ECO:0000303" key="6">
    <source>
    </source>
</evidence>
<evidence type="ECO:0000305" key="7"/>
<evidence type="ECO:0000312" key="8">
    <source>
        <dbReference type="Araport" id="AT1G15940"/>
    </source>
</evidence>
<evidence type="ECO:0000312" key="9">
    <source>
        <dbReference type="EMBL" id="AAF18491.1"/>
    </source>
</evidence>
<accession>Q9S9P0</accession>
<accession>Q0WPH2</accession>
<proteinExistence type="evidence at transcript level"/>
<reference key="1">
    <citation type="journal article" date="2000" name="Nature">
        <title>Sequence and analysis of chromosome 1 of the plant Arabidopsis thaliana.</title>
        <authorList>
            <person name="Theologis A."/>
            <person name="Ecker J.R."/>
            <person name="Palm C.J."/>
            <person name="Federspiel N.A."/>
            <person name="Kaul S."/>
            <person name="White O."/>
            <person name="Alonso J."/>
            <person name="Altafi H."/>
            <person name="Araujo R."/>
            <person name="Bowman C.L."/>
            <person name="Brooks S.Y."/>
            <person name="Buehler E."/>
            <person name="Chan A."/>
            <person name="Chao Q."/>
            <person name="Chen H."/>
            <person name="Cheuk R.F."/>
            <person name="Chin C.W."/>
            <person name="Chung M.K."/>
            <person name="Conn L."/>
            <person name="Conway A.B."/>
            <person name="Conway A.R."/>
            <person name="Creasy T.H."/>
            <person name="Dewar K."/>
            <person name="Dunn P."/>
            <person name="Etgu P."/>
            <person name="Feldblyum T.V."/>
            <person name="Feng J.-D."/>
            <person name="Fong B."/>
            <person name="Fujii C.Y."/>
            <person name="Gill J.E."/>
            <person name="Goldsmith A.D."/>
            <person name="Haas B."/>
            <person name="Hansen N.F."/>
            <person name="Hughes B."/>
            <person name="Huizar L."/>
            <person name="Hunter J.L."/>
            <person name="Jenkins J."/>
            <person name="Johnson-Hopson C."/>
            <person name="Khan S."/>
            <person name="Khaykin E."/>
            <person name="Kim C.J."/>
            <person name="Koo H.L."/>
            <person name="Kremenetskaia I."/>
            <person name="Kurtz D.B."/>
            <person name="Kwan A."/>
            <person name="Lam B."/>
            <person name="Langin-Hooper S."/>
            <person name="Lee A."/>
            <person name="Lee J.M."/>
            <person name="Lenz C.A."/>
            <person name="Li J.H."/>
            <person name="Li Y.-P."/>
            <person name="Lin X."/>
            <person name="Liu S.X."/>
            <person name="Liu Z.A."/>
            <person name="Luros J.S."/>
            <person name="Maiti R."/>
            <person name="Marziali A."/>
            <person name="Militscher J."/>
            <person name="Miranda M."/>
            <person name="Nguyen M."/>
            <person name="Nierman W.C."/>
            <person name="Osborne B.I."/>
            <person name="Pai G."/>
            <person name="Peterson J."/>
            <person name="Pham P.K."/>
            <person name="Rizzo M."/>
            <person name="Rooney T."/>
            <person name="Rowley D."/>
            <person name="Sakano H."/>
            <person name="Salzberg S.L."/>
            <person name="Schwartz J.R."/>
            <person name="Shinn P."/>
            <person name="Southwick A.M."/>
            <person name="Sun H."/>
            <person name="Tallon L.J."/>
            <person name="Tambunga G."/>
            <person name="Toriumi M.J."/>
            <person name="Town C.D."/>
            <person name="Utterback T."/>
            <person name="Van Aken S."/>
            <person name="Vaysberg M."/>
            <person name="Vysotskaia V.S."/>
            <person name="Walker M."/>
            <person name="Wu D."/>
            <person name="Yu G."/>
            <person name="Fraser C.M."/>
            <person name="Venter J.C."/>
            <person name="Davis R.W."/>
        </authorList>
    </citation>
    <scope>NUCLEOTIDE SEQUENCE [LARGE SCALE GENOMIC DNA]</scope>
    <source>
        <strain>cv. Columbia</strain>
    </source>
</reference>
<reference key="2">
    <citation type="journal article" date="2017" name="Plant J.">
        <title>Araport11: a complete reannotation of the Arabidopsis thaliana reference genome.</title>
        <authorList>
            <person name="Cheng C.Y."/>
            <person name="Krishnakumar V."/>
            <person name="Chan A.P."/>
            <person name="Thibaud-Nissen F."/>
            <person name="Schobel S."/>
            <person name="Town C.D."/>
        </authorList>
    </citation>
    <scope>GENOME REANNOTATION</scope>
    <source>
        <strain>cv. Columbia</strain>
    </source>
</reference>
<reference key="3">
    <citation type="submission" date="2006-07" db="EMBL/GenBank/DDBJ databases">
        <title>Large-scale analysis of RIKEN Arabidopsis full-length (RAFL) cDNAs.</title>
        <authorList>
            <person name="Totoki Y."/>
            <person name="Seki M."/>
            <person name="Ishida J."/>
            <person name="Nakajima M."/>
            <person name="Enju A."/>
            <person name="Kamiya A."/>
            <person name="Narusaka M."/>
            <person name="Shin-i T."/>
            <person name="Nakagawa M."/>
            <person name="Sakamoto N."/>
            <person name="Oishi K."/>
            <person name="Kohara Y."/>
            <person name="Kobayashi M."/>
            <person name="Toyoda A."/>
            <person name="Sakaki Y."/>
            <person name="Sakurai T."/>
            <person name="Iida K."/>
            <person name="Akiyama K."/>
            <person name="Satou M."/>
            <person name="Toyoda T."/>
            <person name="Konagaya A."/>
            <person name="Carninci P."/>
            <person name="Kawai J."/>
            <person name="Hayashizaki Y."/>
            <person name="Shinozaki K."/>
        </authorList>
    </citation>
    <scope>NUCLEOTIDE SEQUENCE [LARGE SCALE MRNA] OF 39-990</scope>
    <source>
        <strain>cv. Columbia</strain>
    </source>
</reference>
<reference key="4">
    <citation type="journal article" date="2015" name="Front. Plant Sci.">
        <title>Involvement of the cohesin cofactor PDS5 (SPO76) during meiosis and DNA repair in Arabidopsis thaliana.</title>
        <authorList>
            <person name="Pradillo M."/>
            <person name="Knoll A."/>
            <person name="Oliver C."/>
            <person name="Varas J."/>
            <person name="Corredor E."/>
            <person name="Puchta H."/>
            <person name="Santos J.L."/>
        </authorList>
    </citation>
    <scope>FUNCTION</scope>
    <scope>DISRUPTION PHENOTYPE</scope>
    <source>
        <strain>cv. Columbia</strain>
    </source>
</reference>
<comment type="function">
    <text evidence="1 5">Cohesin cofactor dispensable during the meiotic division but playing an important role in DNA repair by homologous recombination (HR) probably by helping SMC5/SMC6 complex (PubMed:26648949). Regulator of sister chromatid cohesion in mitosis which may stabilize cohesin complex association with chromatin (PubMed:26648949). May couple sister chromatid cohesion during mitosis to DNA replication (By similarity). Cohesion ensures that chromosome partitioning is accurate in both meiotic and mitotic cells and plays an important role in DNA repair (PubMed:26648949).</text>
</comment>
<comment type="subunit">
    <text evidence="1">Interacts with the cohesin complex.</text>
</comment>
<comment type="subcellular location">
    <subcellularLocation>
        <location evidence="3">Nucleus</location>
    </subcellularLocation>
</comment>
<comment type="disruption phenotype">
    <text evidence="5">Weak impact on meiosis such as formation of some chromosome bridges at late anaphase I and telophase I in forming pollen, but severe effects on development, fertility, somatic homologous recombination (HR) and DNA repair, especially in plants lacking PDS5A, PDS5B, PDS5C, PDS5D and PDS5E.</text>
</comment>
<comment type="similarity">
    <text evidence="7">Belongs to the PDS5 family.</text>
</comment>